<accession>Q6DHL7</accession>
<feature type="chain" id="PRO_0000345412" description="Coiled-coil domain-containing protein 85C-B">
    <location>
        <begin position="1"/>
        <end position="399"/>
    </location>
</feature>
<feature type="region of interest" description="Disordered" evidence="4">
    <location>
        <begin position="151"/>
        <end position="199"/>
    </location>
</feature>
<feature type="coiled-coil region" evidence="3">
    <location>
        <begin position="52"/>
        <end position="84"/>
    </location>
</feature>
<feature type="coiled-coil region" evidence="3">
    <location>
        <begin position="113"/>
        <end position="144"/>
    </location>
</feature>
<feature type="compositionally biased region" description="Low complexity" evidence="4">
    <location>
        <begin position="155"/>
        <end position="169"/>
    </location>
</feature>
<sequence>MAKHCPNDDLSKIPDEELVRWSKEDLIRRLRRVDGEKMSLMLEHSNMMKDVNRSLQVHLHEIRNLKEINQKLQDDNQELRELCCFLDDDRQKGKKLSREWQRFGKFTASSVWKEVSTYQQKLKELEINQENVLRENAELKDIILMLDEDRNGAGSRSSIDSQSSLSNLNGGSGTVRDVGDGSSTSSGGSAGSPDHHHNHIHKTVEAKIGTVRRSMDDLSAPHHHRSIPAGLNDASSNYIRQLETKVRILEDNNNKLLSQPCSRYSLSKLSMKYNPGDLRALRKGMTLYHSESQLSSLPQRQEALLNGTGRLQTSESSPSTGFISSAQKPEAVVHAMKVLEVHDNLEKQLPEESEEDLSEKEKAIVREMCNVVWRKLGDATGTKPSLRQQLSGNQFKAPL</sequence>
<dbReference type="EMBL" id="BC075952">
    <property type="protein sequence ID" value="AAH75952.1"/>
    <property type="molecule type" value="mRNA"/>
</dbReference>
<dbReference type="RefSeq" id="NP_001002628.1">
    <property type="nucleotide sequence ID" value="NM_001002628.1"/>
</dbReference>
<dbReference type="SMR" id="Q6DHL7"/>
<dbReference type="FunCoup" id="Q6DHL7">
    <property type="interactions" value="1040"/>
</dbReference>
<dbReference type="STRING" id="7955.ENSDARP00000097929"/>
<dbReference type="PaxDb" id="7955-ENSDARP00000097929"/>
<dbReference type="Ensembl" id="ENSDART00000182876">
    <property type="protein sequence ID" value="ENSDARP00000153712"/>
    <property type="gene ID" value="ENSDARG00000079555"/>
</dbReference>
<dbReference type="GeneID" id="436901"/>
<dbReference type="KEGG" id="dre:436901"/>
<dbReference type="AGR" id="ZFIN:ZDB-GENE-040718-373"/>
<dbReference type="CTD" id="436901"/>
<dbReference type="ZFIN" id="ZDB-GENE-040718-373">
    <property type="gene designation" value="ccdc85cb"/>
</dbReference>
<dbReference type="eggNOG" id="KOG3819">
    <property type="taxonomic scope" value="Eukaryota"/>
</dbReference>
<dbReference type="HOGENOM" id="CLU_028762_0_0_1"/>
<dbReference type="InParanoid" id="Q6DHL7"/>
<dbReference type="OMA" id="DTEHMND"/>
<dbReference type="OrthoDB" id="10056395at2759"/>
<dbReference type="PhylomeDB" id="Q6DHL7"/>
<dbReference type="TreeFam" id="TF320243"/>
<dbReference type="PRO" id="PR:Q6DHL7"/>
<dbReference type="Proteomes" id="UP000000437">
    <property type="component" value="Chromosome 20"/>
</dbReference>
<dbReference type="Bgee" id="ENSDARG00000079555">
    <property type="expression patterns" value="Expressed in retina and 24 other cell types or tissues"/>
</dbReference>
<dbReference type="ExpressionAtlas" id="Q6DHL7">
    <property type="expression patterns" value="baseline"/>
</dbReference>
<dbReference type="GO" id="GO:0005912">
    <property type="term" value="C:adherens junction"/>
    <property type="evidence" value="ECO:0007669"/>
    <property type="project" value="UniProtKB-SubCell"/>
</dbReference>
<dbReference type="GO" id="GO:0043296">
    <property type="term" value="C:apical junction complex"/>
    <property type="evidence" value="ECO:0000318"/>
    <property type="project" value="GO_Central"/>
</dbReference>
<dbReference type="GO" id="GO:0005923">
    <property type="term" value="C:bicellular tight junction"/>
    <property type="evidence" value="ECO:0007669"/>
    <property type="project" value="UniProtKB-SubCell"/>
</dbReference>
<dbReference type="InterPro" id="IPR019359">
    <property type="entry name" value="CCDC85"/>
</dbReference>
<dbReference type="PANTHER" id="PTHR13546:SF14">
    <property type="entry name" value="COILED-COIL DOMAIN-CONTAINING PROTEIN 85C"/>
    <property type="match status" value="1"/>
</dbReference>
<dbReference type="PANTHER" id="PTHR13546">
    <property type="entry name" value="RE60986P"/>
    <property type="match status" value="1"/>
</dbReference>
<dbReference type="Pfam" id="PF10226">
    <property type="entry name" value="CCDC85"/>
    <property type="match status" value="1"/>
</dbReference>
<proteinExistence type="evidence at transcript level"/>
<reference key="1">
    <citation type="submission" date="2004-07" db="EMBL/GenBank/DDBJ databases">
        <authorList>
            <consortium name="NIH - Zebrafish Gene Collection (ZGC) project"/>
        </authorList>
    </citation>
    <scope>NUCLEOTIDE SEQUENCE [LARGE SCALE MRNA]</scope>
</reference>
<protein>
    <recommendedName>
        <fullName>Coiled-coil domain-containing protein 85C-B</fullName>
    </recommendedName>
</protein>
<name>C85CB_DANRE</name>
<organism>
    <name type="scientific">Danio rerio</name>
    <name type="common">Zebrafish</name>
    <name type="synonym">Brachydanio rerio</name>
    <dbReference type="NCBI Taxonomy" id="7955"/>
    <lineage>
        <taxon>Eukaryota</taxon>
        <taxon>Metazoa</taxon>
        <taxon>Chordata</taxon>
        <taxon>Craniata</taxon>
        <taxon>Vertebrata</taxon>
        <taxon>Euteleostomi</taxon>
        <taxon>Actinopterygii</taxon>
        <taxon>Neopterygii</taxon>
        <taxon>Teleostei</taxon>
        <taxon>Ostariophysi</taxon>
        <taxon>Cypriniformes</taxon>
        <taxon>Danionidae</taxon>
        <taxon>Danioninae</taxon>
        <taxon>Danio</taxon>
    </lineage>
</organism>
<keyword id="KW-0965">Cell junction</keyword>
<keyword id="KW-0175">Coiled coil</keyword>
<keyword id="KW-0217">Developmental protein</keyword>
<keyword id="KW-1185">Reference proteome</keyword>
<keyword id="KW-0796">Tight junction</keyword>
<evidence type="ECO:0000250" key="1">
    <source>
        <dbReference type="UniProtKB" id="A6NKD9"/>
    </source>
</evidence>
<evidence type="ECO:0000250" key="2">
    <source>
        <dbReference type="UniProtKB" id="E9Q6B2"/>
    </source>
</evidence>
<evidence type="ECO:0000255" key="3"/>
<evidence type="ECO:0000256" key="4">
    <source>
        <dbReference type="SAM" id="MobiDB-lite"/>
    </source>
</evidence>
<evidence type="ECO:0000305" key="5"/>
<gene>
    <name type="primary">ccdc85cb</name>
    <name type="ORF">zgc:92236</name>
</gene>
<comment type="function">
    <text evidence="1 2">May play a role in cell-cell adhesion and epithelium development through its interaction with proteins of the beta-catenin family (By similarity). May play an important role in cortical development, especially in the maintenance of radial glia (By similarity).</text>
</comment>
<comment type="subcellular location">
    <subcellularLocation>
        <location evidence="2">Cell junction</location>
        <location evidence="2">Tight junction</location>
    </subcellularLocation>
    <subcellularLocation>
        <location evidence="1">Cell junction</location>
        <location evidence="1">Adherens junction</location>
    </subcellularLocation>
</comment>
<comment type="similarity">
    <text evidence="5">Belongs to the CCDC85 family.</text>
</comment>